<sequence>MIDYKINEILVKQLNDDYNCSICVDPVLNSLPLEQHQALSCKNGHLLCQACWGKQLALRKECCICKIKVESISELCRNIFLEKGFRNKKVHCPNGFENFKVDEKLIKDESDGCKSVITIDQLESHLRECEFVFIECPNDPIRCKDKFRKNQTDKHMNKCQYVTINCEHCKEPVIKNDMPTHIENDCSIISLECEFCKDKFGRRSLENHIANECPNVVIDCPHKEGGCTARIKRCYLSQHLTEEDNHIRYMQKIIEKHRIQVEESDRIIKKLRVDYKELEKRVEITSRYKGNWTIENWSQKLTHYPNNERLKSPYFCIGSKSFYVGLYPNGFNQTNAGFMSIFLHLYEKPSTSTTVVRFSFELLHSDPTKSLKFEKSNKYTENKGSGFSQFIDIKMINNFIIDGKLTINIDVEVIPPSSSLVTK</sequence>
<feature type="chain" id="PRO_0000393720" description="TNF receptor-associated factor family protein DDB_G0277243">
    <location>
        <begin position="1"/>
        <end position="423"/>
    </location>
</feature>
<feature type="domain" description="MATH" evidence="2">
    <location>
        <begin position="287"/>
        <end position="411"/>
    </location>
</feature>
<feature type="zinc finger region" description="RING-type; degenerate">
    <location>
        <begin position="20"/>
        <end position="66"/>
    </location>
</feature>
<feature type="zinc finger region" description="TRAF-type 1" evidence="3">
    <location>
        <begin position="124"/>
        <end position="179"/>
    </location>
</feature>
<feature type="zinc finger region" description="TRAF-type 2" evidence="3">
    <location>
        <begin position="180"/>
        <end position="237"/>
    </location>
</feature>
<accession>Q86K46</accession>
<accession>Q54ZW9</accession>
<reference key="1">
    <citation type="journal article" date="2002" name="Nature">
        <title>Sequence and analysis of chromosome 2 of Dictyostelium discoideum.</title>
        <authorList>
            <person name="Gloeckner G."/>
            <person name="Eichinger L."/>
            <person name="Szafranski K."/>
            <person name="Pachebat J.A."/>
            <person name="Bankier A.T."/>
            <person name="Dear P.H."/>
            <person name="Lehmann R."/>
            <person name="Baumgart C."/>
            <person name="Parra G."/>
            <person name="Abril J.F."/>
            <person name="Guigo R."/>
            <person name="Kumpf K."/>
            <person name="Tunggal B."/>
            <person name="Cox E.C."/>
            <person name="Quail M.A."/>
            <person name="Platzer M."/>
            <person name="Rosenthal A."/>
            <person name="Noegel A.A."/>
        </authorList>
    </citation>
    <scope>NUCLEOTIDE SEQUENCE [LARGE SCALE GENOMIC DNA]</scope>
    <source>
        <strain>AX4</strain>
    </source>
</reference>
<reference key="2">
    <citation type="journal article" date="2005" name="Nature">
        <title>The genome of the social amoeba Dictyostelium discoideum.</title>
        <authorList>
            <person name="Eichinger L."/>
            <person name="Pachebat J.A."/>
            <person name="Gloeckner G."/>
            <person name="Rajandream M.A."/>
            <person name="Sucgang R."/>
            <person name="Berriman M."/>
            <person name="Song J."/>
            <person name="Olsen R."/>
            <person name="Szafranski K."/>
            <person name="Xu Q."/>
            <person name="Tunggal B."/>
            <person name="Kummerfeld S."/>
            <person name="Madera M."/>
            <person name="Konfortov B.A."/>
            <person name="Rivero F."/>
            <person name="Bankier A.T."/>
            <person name="Lehmann R."/>
            <person name="Hamlin N."/>
            <person name="Davies R."/>
            <person name="Gaudet P."/>
            <person name="Fey P."/>
            <person name="Pilcher K."/>
            <person name="Chen G."/>
            <person name="Saunders D."/>
            <person name="Sodergren E.J."/>
            <person name="Davis P."/>
            <person name="Kerhornou A."/>
            <person name="Nie X."/>
            <person name="Hall N."/>
            <person name="Anjard C."/>
            <person name="Hemphill L."/>
            <person name="Bason N."/>
            <person name="Farbrother P."/>
            <person name="Desany B."/>
            <person name="Just E."/>
            <person name="Morio T."/>
            <person name="Rost R."/>
            <person name="Churcher C.M."/>
            <person name="Cooper J."/>
            <person name="Haydock S."/>
            <person name="van Driessche N."/>
            <person name="Cronin A."/>
            <person name="Goodhead I."/>
            <person name="Muzny D.M."/>
            <person name="Mourier T."/>
            <person name="Pain A."/>
            <person name="Lu M."/>
            <person name="Harper D."/>
            <person name="Lindsay R."/>
            <person name="Hauser H."/>
            <person name="James K.D."/>
            <person name="Quiles M."/>
            <person name="Madan Babu M."/>
            <person name="Saito T."/>
            <person name="Buchrieser C."/>
            <person name="Wardroper A."/>
            <person name="Felder M."/>
            <person name="Thangavelu M."/>
            <person name="Johnson D."/>
            <person name="Knights A."/>
            <person name="Loulseged H."/>
            <person name="Mungall K.L."/>
            <person name="Oliver K."/>
            <person name="Price C."/>
            <person name="Quail M.A."/>
            <person name="Urushihara H."/>
            <person name="Hernandez J."/>
            <person name="Rabbinowitsch E."/>
            <person name="Steffen D."/>
            <person name="Sanders M."/>
            <person name="Ma J."/>
            <person name="Kohara Y."/>
            <person name="Sharp S."/>
            <person name="Simmonds M.N."/>
            <person name="Spiegler S."/>
            <person name="Tivey A."/>
            <person name="Sugano S."/>
            <person name="White B."/>
            <person name="Walker D."/>
            <person name="Woodward J.R."/>
            <person name="Winckler T."/>
            <person name="Tanaka Y."/>
            <person name="Shaulsky G."/>
            <person name="Schleicher M."/>
            <person name="Weinstock G.M."/>
            <person name="Rosenthal A."/>
            <person name="Cox E.C."/>
            <person name="Chisholm R.L."/>
            <person name="Gibbs R.A."/>
            <person name="Loomis W.F."/>
            <person name="Platzer M."/>
            <person name="Kay R.R."/>
            <person name="Williams J.G."/>
            <person name="Dear P.H."/>
            <person name="Noegel A.A."/>
            <person name="Barrell B.G."/>
            <person name="Kuspa A."/>
        </authorList>
    </citation>
    <scope>NUCLEOTIDE SEQUENCE [LARGE SCALE GENOMIC DNA]</scope>
    <source>
        <strain>AX4</strain>
    </source>
</reference>
<keyword id="KW-0963">Cytoplasm</keyword>
<keyword id="KW-0479">Metal-binding</keyword>
<keyword id="KW-1185">Reference proteome</keyword>
<keyword id="KW-0677">Repeat</keyword>
<keyword id="KW-0862">Zinc</keyword>
<keyword id="KW-0863">Zinc-finger</keyword>
<gene>
    <name type="ORF">DDB_G0277243</name>
</gene>
<comment type="function">
    <text evidence="1">Probable adapter protein and signal transducer that links members of the tumor necrosis factor receptor family to different signaling pathways by association with the receptor cytoplasmic domain and kinases.</text>
</comment>
<comment type="subcellular location">
    <subcellularLocation>
        <location evidence="1">Cytoplasm</location>
    </subcellularLocation>
</comment>
<comment type="domain">
    <text>The MATH/TRAF domain binds to receptor cytoplasmic domains.</text>
</comment>
<comment type="similarity">
    <text evidence="4">Belongs to the TNF receptor-associated factor family. A subfamily.</text>
</comment>
<dbReference type="EMBL" id="AAFI02000019">
    <property type="protein sequence ID" value="EAL68807.1"/>
    <property type="molecule type" value="Genomic_DNA"/>
</dbReference>
<dbReference type="RefSeq" id="XP_642747.1">
    <property type="nucleotide sequence ID" value="XM_637655.1"/>
</dbReference>
<dbReference type="SMR" id="Q86K46"/>
<dbReference type="FunCoup" id="Q86K46">
    <property type="interactions" value="7"/>
</dbReference>
<dbReference type="STRING" id="44689.Q86K46"/>
<dbReference type="PaxDb" id="44689-DDB0237657"/>
<dbReference type="EnsemblProtists" id="EAL68807">
    <property type="protein sequence ID" value="EAL68807"/>
    <property type="gene ID" value="DDB_G0277243"/>
</dbReference>
<dbReference type="GeneID" id="8620937"/>
<dbReference type="KEGG" id="ddi:DDB_G0277243"/>
<dbReference type="dictyBase" id="DDB_G0277243">
    <property type="gene designation" value="trafF"/>
</dbReference>
<dbReference type="VEuPathDB" id="AmoebaDB:DDB_G0277243"/>
<dbReference type="eggNOG" id="KOG0297">
    <property type="taxonomic scope" value="Eukaryota"/>
</dbReference>
<dbReference type="HOGENOM" id="CLU_040980_0_0_1"/>
<dbReference type="InParanoid" id="Q86K46"/>
<dbReference type="OMA" id="CENHLNT"/>
<dbReference type="PhylomeDB" id="Q86K46"/>
<dbReference type="PRO" id="PR:Q86K46"/>
<dbReference type="Proteomes" id="UP000002195">
    <property type="component" value="Chromosome 2"/>
</dbReference>
<dbReference type="GO" id="GO:0005737">
    <property type="term" value="C:cytoplasm"/>
    <property type="evidence" value="ECO:0000318"/>
    <property type="project" value="GO_Central"/>
</dbReference>
<dbReference type="GO" id="GO:0008270">
    <property type="term" value="F:zinc ion binding"/>
    <property type="evidence" value="ECO:0007669"/>
    <property type="project" value="UniProtKB-KW"/>
</dbReference>
<dbReference type="CDD" id="cd00121">
    <property type="entry name" value="MATH"/>
    <property type="match status" value="1"/>
</dbReference>
<dbReference type="Gene3D" id="2.60.210.10">
    <property type="entry name" value="Apoptosis, Tumor Necrosis Factor Receptor Associated Protein 2, Chain A"/>
    <property type="match status" value="1"/>
</dbReference>
<dbReference type="Gene3D" id="3.30.40.10">
    <property type="entry name" value="Zinc/RING finger domain, C3HC4 (zinc finger)"/>
    <property type="match status" value="3"/>
</dbReference>
<dbReference type="InterPro" id="IPR002083">
    <property type="entry name" value="MATH/TRAF_dom"/>
</dbReference>
<dbReference type="InterPro" id="IPR008974">
    <property type="entry name" value="TRAF-like"/>
</dbReference>
<dbReference type="InterPro" id="IPR013083">
    <property type="entry name" value="Znf_RING/FYVE/PHD"/>
</dbReference>
<dbReference type="InterPro" id="IPR001293">
    <property type="entry name" value="Znf_TRAF"/>
</dbReference>
<dbReference type="PANTHER" id="PTHR10131">
    <property type="entry name" value="TNF RECEPTOR ASSOCIATED FACTOR"/>
    <property type="match status" value="1"/>
</dbReference>
<dbReference type="PANTHER" id="PTHR10131:SF149">
    <property type="entry name" value="TNF RECEPTOR-ASSOCIATED FACTOR FAMILY PROTEIN DDB_G0277243"/>
    <property type="match status" value="1"/>
</dbReference>
<dbReference type="Pfam" id="PF22486">
    <property type="entry name" value="MATH_2"/>
    <property type="match status" value="1"/>
</dbReference>
<dbReference type="Pfam" id="PF02176">
    <property type="entry name" value="zf-TRAF"/>
    <property type="match status" value="1"/>
</dbReference>
<dbReference type="SUPFAM" id="SSF49599">
    <property type="entry name" value="TRAF domain-like"/>
    <property type="match status" value="3"/>
</dbReference>
<dbReference type="PROSITE" id="PS50144">
    <property type="entry name" value="MATH"/>
    <property type="match status" value="1"/>
</dbReference>
<dbReference type="PROSITE" id="PS50145">
    <property type="entry name" value="ZF_TRAF"/>
    <property type="match status" value="2"/>
</dbReference>
<evidence type="ECO:0000250" key="1"/>
<evidence type="ECO:0000255" key="2">
    <source>
        <dbReference type="PROSITE-ProRule" id="PRU00129"/>
    </source>
</evidence>
<evidence type="ECO:0000255" key="3">
    <source>
        <dbReference type="PROSITE-ProRule" id="PRU00207"/>
    </source>
</evidence>
<evidence type="ECO:0000305" key="4"/>
<name>Y7243_DICDI</name>
<organism>
    <name type="scientific">Dictyostelium discoideum</name>
    <name type="common">Social amoeba</name>
    <dbReference type="NCBI Taxonomy" id="44689"/>
    <lineage>
        <taxon>Eukaryota</taxon>
        <taxon>Amoebozoa</taxon>
        <taxon>Evosea</taxon>
        <taxon>Eumycetozoa</taxon>
        <taxon>Dictyostelia</taxon>
        <taxon>Dictyosteliales</taxon>
        <taxon>Dictyosteliaceae</taxon>
        <taxon>Dictyostelium</taxon>
    </lineage>
</organism>
<proteinExistence type="inferred from homology"/>
<protein>
    <recommendedName>
        <fullName>TNF receptor-associated factor family protein DDB_G0277243</fullName>
    </recommendedName>
</protein>